<feature type="chain" id="PRO_1000118746" description="Translation initiation factor IF-2">
    <location>
        <begin position="1"/>
        <end position="686"/>
    </location>
</feature>
<feature type="domain" description="tr-type G">
    <location>
        <begin position="188"/>
        <end position="357"/>
    </location>
</feature>
<feature type="region of interest" description="Disordered" evidence="3">
    <location>
        <begin position="54"/>
        <end position="105"/>
    </location>
</feature>
<feature type="region of interest" description="G1" evidence="1">
    <location>
        <begin position="197"/>
        <end position="204"/>
    </location>
</feature>
<feature type="region of interest" description="G2" evidence="1">
    <location>
        <begin position="222"/>
        <end position="226"/>
    </location>
</feature>
<feature type="region of interest" description="G3" evidence="1">
    <location>
        <begin position="243"/>
        <end position="246"/>
    </location>
</feature>
<feature type="region of interest" description="G4" evidence="1">
    <location>
        <begin position="297"/>
        <end position="300"/>
    </location>
</feature>
<feature type="region of interest" description="G5" evidence="1">
    <location>
        <begin position="333"/>
        <end position="335"/>
    </location>
</feature>
<feature type="compositionally biased region" description="Basic residues" evidence="3">
    <location>
        <begin position="69"/>
        <end position="81"/>
    </location>
</feature>
<feature type="binding site" evidence="2">
    <location>
        <begin position="197"/>
        <end position="204"/>
    </location>
    <ligand>
        <name>GTP</name>
        <dbReference type="ChEBI" id="CHEBI:37565"/>
    </ligand>
</feature>
<feature type="binding site" evidence="2">
    <location>
        <begin position="243"/>
        <end position="247"/>
    </location>
    <ligand>
        <name>GTP</name>
        <dbReference type="ChEBI" id="CHEBI:37565"/>
    </ligand>
</feature>
<feature type="binding site" evidence="2">
    <location>
        <begin position="297"/>
        <end position="300"/>
    </location>
    <ligand>
        <name>GTP</name>
        <dbReference type="ChEBI" id="CHEBI:37565"/>
    </ligand>
</feature>
<dbReference type="EMBL" id="CP001598">
    <property type="protein sequence ID" value="ACQ47352.1"/>
    <property type="molecule type" value="Genomic_DNA"/>
</dbReference>
<dbReference type="RefSeq" id="WP_000036339.1">
    <property type="nucleotide sequence ID" value="NC_012659.1"/>
</dbReference>
<dbReference type="SMR" id="C3P5L5"/>
<dbReference type="GeneID" id="45023641"/>
<dbReference type="KEGG" id="bai:BAA_3974"/>
<dbReference type="HOGENOM" id="CLU_006301_5_1_9"/>
<dbReference type="GO" id="GO:0005829">
    <property type="term" value="C:cytosol"/>
    <property type="evidence" value="ECO:0007669"/>
    <property type="project" value="TreeGrafter"/>
</dbReference>
<dbReference type="GO" id="GO:0005525">
    <property type="term" value="F:GTP binding"/>
    <property type="evidence" value="ECO:0007669"/>
    <property type="project" value="UniProtKB-KW"/>
</dbReference>
<dbReference type="GO" id="GO:0003924">
    <property type="term" value="F:GTPase activity"/>
    <property type="evidence" value="ECO:0007669"/>
    <property type="project" value="UniProtKB-UniRule"/>
</dbReference>
<dbReference type="GO" id="GO:0003743">
    <property type="term" value="F:translation initiation factor activity"/>
    <property type="evidence" value="ECO:0007669"/>
    <property type="project" value="UniProtKB-UniRule"/>
</dbReference>
<dbReference type="CDD" id="cd01887">
    <property type="entry name" value="IF2_eIF5B"/>
    <property type="match status" value="1"/>
</dbReference>
<dbReference type="CDD" id="cd03702">
    <property type="entry name" value="IF2_mtIF2_II"/>
    <property type="match status" value="1"/>
</dbReference>
<dbReference type="CDD" id="cd03692">
    <property type="entry name" value="mtIF2_IVc"/>
    <property type="match status" value="1"/>
</dbReference>
<dbReference type="FunFam" id="1.10.10.2480:FF:000001">
    <property type="entry name" value="Translation initiation factor IF-2"/>
    <property type="match status" value="1"/>
</dbReference>
<dbReference type="FunFam" id="2.40.30.10:FF:000007">
    <property type="entry name" value="Translation initiation factor IF-2"/>
    <property type="match status" value="1"/>
</dbReference>
<dbReference type="FunFam" id="2.40.30.10:FF:000008">
    <property type="entry name" value="Translation initiation factor IF-2"/>
    <property type="match status" value="1"/>
</dbReference>
<dbReference type="FunFam" id="3.40.50.10050:FF:000001">
    <property type="entry name" value="Translation initiation factor IF-2"/>
    <property type="match status" value="1"/>
</dbReference>
<dbReference type="FunFam" id="3.40.50.300:FF:000019">
    <property type="entry name" value="Translation initiation factor IF-2"/>
    <property type="match status" value="1"/>
</dbReference>
<dbReference type="Gene3D" id="1.10.10.2480">
    <property type="match status" value="1"/>
</dbReference>
<dbReference type="Gene3D" id="3.40.50.300">
    <property type="entry name" value="P-loop containing nucleotide triphosphate hydrolases"/>
    <property type="match status" value="1"/>
</dbReference>
<dbReference type="Gene3D" id="2.40.30.10">
    <property type="entry name" value="Translation factors"/>
    <property type="match status" value="2"/>
</dbReference>
<dbReference type="Gene3D" id="3.40.50.10050">
    <property type="entry name" value="Translation initiation factor IF- 2, domain 3"/>
    <property type="match status" value="1"/>
</dbReference>
<dbReference type="HAMAP" id="MF_00100_B">
    <property type="entry name" value="IF_2_B"/>
    <property type="match status" value="1"/>
</dbReference>
<dbReference type="InterPro" id="IPR053905">
    <property type="entry name" value="EF-G-like_DII"/>
</dbReference>
<dbReference type="InterPro" id="IPR044145">
    <property type="entry name" value="IF2_II"/>
</dbReference>
<dbReference type="InterPro" id="IPR006847">
    <property type="entry name" value="IF2_N"/>
</dbReference>
<dbReference type="InterPro" id="IPR027417">
    <property type="entry name" value="P-loop_NTPase"/>
</dbReference>
<dbReference type="InterPro" id="IPR005225">
    <property type="entry name" value="Small_GTP-bd"/>
</dbReference>
<dbReference type="InterPro" id="IPR000795">
    <property type="entry name" value="T_Tr_GTP-bd_dom"/>
</dbReference>
<dbReference type="InterPro" id="IPR000178">
    <property type="entry name" value="TF_IF2_bacterial-like"/>
</dbReference>
<dbReference type="InterPro" id="IPR015760">
    <property type="entry name" value="TIF_IF2"/>
</dbReference>
<dbReference type="InterPro" id="IPR023115">
    <property type="entry name" value="TIF_IF2_dom3"/>
</dbReference>
<dbReference type="InterPro" id="IPR036925">
    <property type="entry name" value="TIF_IF2_dom3_sf"/>
</dbReference>
<dbReference type="InterPro" id="IPR009000">
    <property type="entry name" value="Transl_B-barrel_sf"/>
</dbReference>
<dbReference type="NCBIfam" id="TIGR00487">
    <property type="entry name" value="IF-2"/>
    <property type="match status" value="1"/>
</dbReference>
<dbReference type="NCBIfam" id="TIGR00231">
    <property type="entry name" value="small_GTP"/>
    <property type="match status" value="1"/>
</dbReference>
<dbReference type="PANTHER" id="PTHR43381:SF5">
    <property type="entry name" value="TR-TYPE G DOMAIN-CONTAINING PROTEIN"/>
    <property type="match status" value="1"/>
</dbReference>
<dbReference type="PANTHER" id="PTHR43381">
    <property type="entry name" value="TRANSLATION INITIATION FACTOR IF-2-RELATED"/>
    <property type="match status" value="1"/>
</dbReference>
<dbReference type="Pfam" id="PF22042">
    <property type="entry name" value="EF-G_D2"/>
    <property type="match status" value="1"/>
</dbReference>
<dbReference type="Pfam" id="PF00009">
    <property type="entry name" value="GTP_EFTU"/>
    <property type="match status" value="1"/>
</dbReference>
<dbReference type="Pfam" id="PF11987">
    <property type="entry name" value="IF-2"/>
    <property type="match status" value="1"/>
</dbReference>
<dbReference type="Pfam" id="PF04760">
    <property type="entry name" value="IF2_N"/>
    <property type="match status" value="2"/>
</dbReference>
<dbReference type="SUPFAM" id="SSF52156">
    <property type="entry name" value="Initiation factor IF2/eIF5b, domain 3"/>
    <property type="match status" value="1"/>
</dbReference>
<dbReference type="SUPFAM" id="SSF52540">
    <property type="entry name" value="P-loop containing nucleoside triphosphate hydrolases"/>
    <property type="match status" value="1"/>
</dbReference>
<dbReference type="SUPFAM" id="SSF50447">
    <property type="entry name" value="Translation proteins"/>
    <property type="match status" value="2"/>
</dbReference>
<dbReference type="PROSITE" id="PS51722">
    <property type="entry name" value="G_TR_2"/>
    <property type="match status" value="1"/>
</dbReference>
<dbReference type="PROSITE" id="PS01176">
    <property type="entry name" value="IF2"/>
    <property type="match status" value="1"/>
</dbReference>
<name>IF2_BACAA</name>
<reference key="1">
    <citation type="submission" date="2009-04" db="EMBL/GenBank/DDBJ databases">
        <title>Genome sequence of Bacillus anthracis A0248.</title>
        <authorList>
            <person name="Dodson R.J."/>
            <person name="Munk A.C."/>
            <person name="Bruce D."/>
            <person name="Detter C."/>
            <person name="Tapia R."/>
            <person name="Sutton G."/>
            <person name="Sims D."/>
            <person name="Brettin T."/>
        </authorList>
    </citation>
    <scope>NUCLEOTIDE SEQUENCE [LARGE SCALE GENOMIC DNA]</scope>
    <source>
        <strain>A0248</strain>
    </source>
</reference>
<proteinExistence type="inferred from homology"/>
<accession>C3P5L5</accession>
<keyword id="KW-0963">Cytoplasm</keyword>
<keyword id="KW-0342">GTP-binding</keyword>
<keyword id="KW-0396">Initiation factor</keyword>
<keyword id="KW-0547">Nucleotide-binding</keyword>
<keyword id="KW-0648">Protein biosynthesis</keyword>
<protein>
    <recommendedName>
        <fullName evidence="2">Translation initiation factor IF-2</fullName>
    </recommendedName>
</protein>
<organism>
    <name type="scientific">Bacillus anthracis (strain A0248)</name>
    <dbReference type="NCBI Taxonomy" id="592021"/>
    <lineage>
        <taxon>Bacteria</taxon>
        <taxon>Bacillati</taxon>
        <taxon>Bacillota</taxon>
        <taxon>Bacilli</taxon>
        <taxon>Bacillales</taxon>
        <taxon>Bacillaceae</taxon>
        <taxon>Bacillus</taxon>
        <taxon>Bacillus cereus group</taxon>
    </lineage>
</organism>
<gene>
    <name evidence="2" type="primary">infB</name>
    <name type="ordered locus">BAA_3974</name>
</gene>
<comment type="function">
    <text evidence="2">One of the essential components for the initiation of protein synthesis. Protects formylmethionyl-tRNA from spontaneous hydrolysis and promotes its binding to the 30S ribosomal subunits. Also involved in the hydrolysis of GTP during the formation of the 70S ribosomal complex.</text>
</comment>
<comment type="subcellular location">
    <subcellularLocation>
        <location evidence="2">Cytoplasm</location>
    </subcellularLocation>
</comment>
<comment type="similarity">
    <text evidence="2">Belongs to the TRAFAC class translation factor GTPase superfamily. Classic translation factor GTPase family. IF-2 subfamily.</text>
</comment>
<evidence type="ECO:0000250" key="1"/>
<evidence type="ECO:0000255" key="2">
    <source>
        <dbReference type="HAMAP-Rule" id="MF_00100"/>
    </source>
</evidence>
<evidence type="ECO:0000256" key="3">
    <source>
        <dbReference type="SAM" id="MobiDB-lite"/>
    </source>
</evidence>
<sequence>MSKIRVHEYAKKHNISSKDLMTKLKEMNIEVSNHMTMLDDEVVNKLDNEYQAEKPSVADEFEVEEKVVRSKKNSNKKKKKGKGNEDKRQENFAGRQQTQTVETPDKITFSGSLTVGDLAKKLSKEPSEIIKKLFMLGIMATINQDLDKDTIELIANDYGIEVEEEVIVSETEFETFIDEQDDEENLKERPAVVTIMGHVDHGKTTLLDSIRNSKVTAGEAGGITQHIGAYQVELNDKKITFLDTPGHAAFTTMRARGAQVTDITIIVVAADDGVMPQTVEAINHAKAAGVPIIVAVNKMDKPAANPDRVMQELTEYELVPEAWGGDTIFVPISAIQGEGIDNLLEMILLISEVEEYKANPNRYATGTVIEAQLDKGKGTIATLLVQNGTLRVGDPIVVGTSFGRVRAMVSDIGRRVKVAGPSTPVEITGLNEVPQAGDRFMAFADEKKARQIGESRAQEALLAQRGEKSKLSLEDLFQQIQEGDVKEINLIVKADVQGSVEAMAASLRKIDVEGVKVKIIHTGVGAITESDIILASASNAIVIGFNVRPDVNAKRTAELENVDIRLHRIIYKVIEEIEAAMQGMLDPEFEEKVIGQAEVRQTFKVTKVGTIAGCYVTDGKITRDSGVRIIRDGVVIFEGQLDTLKRFKDDVKEVAQNYECGITIERYNDLKEGDIIEAYIMEEVKR</sequence>